<dbReference type="EMBL" id="AP006861">
    <property type="protein sequence ID" value="BAE81088.1"/>
    <property type="molecule type" value="Genomic_DNA"/>
</dbReference>
<dbReference type="RefSeq" id="WP_011457868.1">
    <property type="nucleotide sequence ID" value="NC_007899.1"/>
</dbReference>
<dbReference type="SMR" id="Q255F0"/>
<dbReference type="STRING" id="264202.CF0316"/>
<dbReference type="KEGG" id="cfe:CF0316"/>
<dbReference type="eggNOG" id="COG0080">
    <property type="taxonomic scope" value="Bacteria"/>
</dbReference>
<dbReference type="HOGENOM" id="CLU_074237_2_0_0"/>
<dbReference type="OrthoDB" id="9802408at2"/>
<dbReference type="Proteomes" id="UP000001260">
    <property type="component" value="Chromosome"/>
</dbReference>
<dbReference type="GO" id="GO:0022625">
    <property type="term" value="C:cytosolic large ribosomal subunit"/>
    <property type="evidence" value="ECO:0007669"/>
    <property type="project" value="TreeGrafter"/>
</dbReference>
<dbReference type="GO" id="GO:0070180">
    <property type="term" value="F:large ribosomal subunit rRNA binding"/>
    <property type="evidence" value="ECO:0007669"/>
    <property type="project" value="UniProtKB-UniRule"/>
</dbReference>
<dbReference type="GO" id="GO:0003735">
    <property type="term" value="F:structural constituent of ribosome"/>
    <property type="evidence" value="ECO:0007669"/>
    <property type="project" value="InterPro"/>
</dbReference>
<dbReference type="GO" id="GO:0006412">
    <property type="term" value="P:translation"/>
    <property type="evidence" value="ECO:0007669"/>
    <property type="project" value="UniProtKB-UniRule"/>
</dbReference>
<dbReference type="CDD" id="cd00349">
    <property type="entry name" value="Ribosomal_L11"/>
    <property type="match status" value="1"/>
</dbReference>
<dbReference type="FunFam" id="1.10.10.250:FF:000001">
    <property type="entry name" value="50S ribosomal protein L11"/>
    <property type="match status" value="1"/>
</dbReference>
<dbReference type="FunFam" id="3.30.1550.10:FF:000001">
    <property type="entry name" value="50S ribosomal protein L11"/>
    <property type="match status" value="1"/>
</dbReference>
<dbReference type="Gene3D" id="1.10.10.250">
    <property type="entry name" value="Ribosomal protein L11, C-terminal domain"/>
    <property type="match status" value="1"/>
</dbReference>
<dbReference type="Gene3D" id="3.30.1550.10">
    <property type="entry name" value="Ribosomal protein L11/L12, N-terminal domain"/>
    <property type="match status" value="1"/>
</dbReference>
<dbReference type="HAMAP" id="MF_00736">
    <property type="entry name" value="Ribosomal_uL11"/>
    <property type="match status" value="1"/>
</dbReference>
<dbReference type="InterPro" id="IPR000911">
    <property type="entry name" value="Ribosomal_uL11"/>
</dbReference>
<dbReference type="InterPro" id="IPR006519">
    <property type="entry name" value="Ribosomal_uL11_bac-typ"/>
</dbReference>
<dbReference type="InterPro" id="IPR020783">
    <property type="entry name" value="Ribosomal_uL11_C"/>
</dbReference>
<dbReference type="InterPro" id="IPR036769">
    <property type="entry name" value="Ribosomal_uL11_C_sf"/>
</dbReference>
<dbReference type="InterPro" id="IPR020785">
    <property type="entry name" value="Ribosomal_uL11_CS"/>
</dbReference>
<dbReference type="InterPro" id="IPR020784">
    <property type="entry name" value="Ribosomal_uL11_N"/>
</dbReference>
<dbReference type="InterPro" id="IPR036796">
    <property type="entry name" value="Ribosomal_uL11_N_sf"/>
</dbReference>
<dbReference type="NCBIfam" id="TIGR01632">
    <property type="entry name" value="L11_bact"/>
    <property type="match status" value="1"/>
</dbReference>
<dbReference type="PANTHER" id="PTHR11661">
    <property type="entry name" value="60S RIBOSOMAL PROTEIN L12"/>
    <property type="match status" value="1"/>
</dbReference>
<dbReference type="PANTHER" id="PTHR11661:SF1">
    <property type="entry name" value="LARGE RIBOSOMAL SUBUNIT PROTEIN UL11M"/>
    <property type="match status" value="1"/>
</dbReference>
<dbReference type="Pfam" id="PF00298">
    <property type="entry name" value="Ribosomal_L11"/>
    <property type="match status" value="1"/>
</dbReference>
<dbReference type="Pfam" id="PF03946">
    <property type="entry name" value="Ribosomal_L11_N"/>
    <property type="match status" value="1"/>
</dbReference>
<dbReference type="SMART" id="SM00649">
    <property type="entry name" value="RL11"/>
    <property type="match status" value="1"/>
</dbReference>
<dbReference type="SUPFAM" id="SSF54747">
    <property type="entry name" value="Ribosomal L11/L12e N-terminal domain"/>
    <property type="match status" value="1"/>
</dbReference>
<dbReference type="SUPFAM" id="SSF46906">
    <property type="entry name" value="Ribosomal protein L11, C-terminal domain"/>
    <property type="match status" value="1"/>
</dbReference>
<dbReference type="PROSITE" id="PS00359">
    <property type="entry name" value="RIBOSOMAL_L11"/>
    <property type="match status" value="1"/>
</dbReference>
<reference key="1">
    <citation type="journal article" date="2006" name="DNA Res.">
        <title>Genome sequence of the cat pathogen, Chlamydophila felis.</title>
        <authorList>
            <person name="Azuma Y."/>
            <person name="Hirakawa H."/>
            <person name="Yamashita A."/>
            <person name="Cai Y."/>
            <person name="Rahman M.A."/>
            <person name="Suzuki H."/>
            <person name="Mitaku S."/>
            <person name="Toh H."/>
            <person name="Goto S."/>
            <person name="Murakami T."/>
            <person name="Sugi K."/>
            <person name="Hayashi H."/>
            <person name="Fukushi H."/>
            <person name="Hattori M."/>
            <person name="Kuhara S."/>
            <person name="Shirai M."/>
        </authorList>
    </citation>
    <scope>NUCLEOTIDE SEQUENCE [LARGE SCALE GENOMIC DNA]</scope>
    <source>
        <strain>Fe/C-56</strain>
    </source>
</reference>
<protein>
    <recommendedName>
        <fullName evidence="1">Large ribosomal subunit protein uL11</fullName>
    </recommendedName>
    <alternativeName>
        <fullName evidence="2">50S ribosomal protein L11</fullName>
    </alternativeName>
</protein>
<accession>Q255F0</accession>
<name>RL11_CHLFF</name>
<evidence type="ECO:0000255" key="1">
    <source>
        <dbReference type="HAMAP-Rule" id="MF_00736"/>
    </source>
</evidence>
<evidence type="ECO:0000305" key="2"/>
<sequence>MSNKKVIKLIKLQIPGGKANPAPPIGPALGAAGVNIMGFCKEFNAATQDRPGDLLPVVITVYSDKTFTFITKQPPVSSLIKKALNLESGSKIPNRNKVGKLTQEQVTAIAEQKMKDMDVVLLESAKRMVEGTARSMGIDVE</sequence>
<gene>
    <name evidence="1" type="primary">rplK</name>
    <name type="ordered locus">CF0316</name>
</gene>
<comment type="function">
    <text evidence="1">Forms part of the ribosomal stalk which helps the ribosome interact with GTP-bound translation factors.</text>
</comment>
<comment type="subunit">
    <text evidence="1">Part of the ribosomal stalk of the 50S ribosomal subunit. Interacts with L10 and the large rRNA to form the base of the stalk. L10 forms an elongated spine to which L12 dimers bind in a sequential fashion forming a multimeric L10(L12)X complex.</text>
</comment>
<comment type="PTM">
    <text evidence="1">One or more lysine residues are methylated.</text>
</comment>
<comment type="similarity">
    <text evidence="1">Belongs to the universal ribosomal protein uL11 family.</text>
</comment>
<organism>
    <name type="scientific">Chlamydia felis (strain Fe/C-56)</name>
    <name type="common">Chlamydophila felis</name>
    <dbReference type="NCBI Taxonomy" id="264202"/>
    <lineage>
        <taxon>Bacteria</taxon>
        <taxon>Pseudomonadati</taxon>
        <taxon>Chlamydiota</taxon>
        <taxon>Chlamydiia</taxon>
        <taxon>Chlamydiales</taxon>
        <taxon>Chlamydiaceae</taxon>
        <taxon>Chlamydia/Chlamydophila group</taxon>
        <taxon>Chlamydia</taxon>
    </lineage>
</organism>
<proteinExistence type="inferred from homology"/>
<keyword id="KW-0488">Methylation</keyword>
<keyword id="KW-0687">Ribonucleoprotein</keyword>
<keyword id="KW-0689">Ribosomal protein</keyword>
<keyword id="KW-0694">RNA-binding</keyword>
<keyword id="KW-0699">rRNA-binding</keyword>
<feature type="chain" id="PRO_0000258137" description="Large ribosomal subunit protein uL11">
    <location>
        <begin position="1"/>
        <end position="141"/>
    </location>
</feature>